<name>SDHD_GEOKA</name>
<comment type="catalytic activity">
    <reaction evidence="1">
        <text>D-serine = pyruvate + NH4(+)</text>
        <dbReference type="Rhea" id="RHEA:13977"/>
        <dbReference type="ChEBI" id="CHEBI:15361"/>
        <dbReference type="ChEBI" id="CHEBI:28938"/>
        <dbReference type="ChEBI" id="CHEBI:35247"/>
        <dbReference type="EC" id="4.3.1.18"/>
    </reaction>
</comment>
<comment type="cofactor">
    <cofactor evidence="1">
        <name>pyridoxal 5'-phosphate</name>
        <dbReference type="ChEBI" id="CHEBI:597326"/>
    </cofactor>
</comment>
<comment type="similarity">
    <text evidence="1">Belongs to the serine/threonine dehydratase family. DsdA subfamily.</text>
</comment>
<organism>
    <name type="scientific">Geobacillus kaustophilus (strain HTA426)</name>
    <dbReference type="NCBI Taxonomy" id="235909"/>
    <lineage>
        <taxon>Bacteria</taxon>
        <taxon>Bacillati</taxon>
        <taxon>Bacillota</taxon>
        <taxon>Bacilli</taxon>
        <taxon>Bacillales</taxon>
        <taxon>Anoxybacillaceae</taxon>
        <taxon>Geobacillus</taxon>
        <taxon>Geobacillus thermoleovorans group</taxon>
    </lineage>
</organism>
<protein>
    <recommendedName>
        <fullName evidence="1">Probable D-serine dehydratase</fullName>
        <ecNumber evidence="1">4.3.1.18</ecNumber>
    </recommendedName>
    <alternativeName>
        <fullName evidence="1">D-serine deaminase</fullName>
        <shortName evidence="1">DSD</shortName>
    </alternativeName>
</protein>
<keyword id="KW-0456">Lyase</keyword>
<keyword id="KW-0663">Pyridoxal phosphate</keyword>
<keyword id="KW-1185">Reference proteome</keyword>
<proteinExistence type="inferred from homology"/>
<sequence length="441" mass="49082">MIMAAEEVFWRNPKYHAFAQAIRTIPLRERDVKEAEERLRRFAPYIAKVFPETQPAHGIIESPLVRIPNMQRRLEKMFQTNIEGDLLLKCDSHLPISGSIKARGGIYEVLKHAEDLALANGMIAIGEDYAVMASEEFRQFFSRYSLVVGSTGNLGLSIGIIGAQLGFRVTVHMSADAKQWKKDLLRSKGVTVIEHLTDYNKVVEEARRQSAEDPTSYFIDDENSIHLFLGYAVAAFRLKKQLEDMNITVDETHPLFVYLPCGVGGGPGGVTFGLKLVYGDHVHCFFAEPTHSPCMLLGLMTGEHDRVSVQDFGLDNKTEADGLAVGRPSRLVGNMLENVISGVYTVDDSTLYRLLAAMVETEEIYLEPSALAGVAGPVRLFRDSAGQTYVEENDLKEKMKNAVHICWATGGSMVPKGVMEAYYREGMRIETMTGNCFSEGR</sequence>
<evidence type="ECO:0000255" key="1">
    <source>
        <dbReference type="HAMAP-Rule" id="MF_01030"/>
    </source>
</evidence>
<accession>Q75TC9</accession>
<accession>Q5KYM9</accession>
<reference key="1">
    <citation type="journal article" date="2004" name="Extremophiles">
        <title>Genomic characterization of thermophilic Geobacillus species isolated from the deepest sea mud of the Mariana Trench.</title>
        <authorList>
            <person name="Takami H."/>
            <person name="Nishi S."/>
            <person name="Lu J."/>
            <person name="Shimamura S."/>
            <person name="Takaki Y."/>
        </authorList>
    </citation>
    <scope>NUCLEOTIDE SEQUENCE [GENOMIC DNA]</scope>
    <source>
        <strain>HTA426</strain>
    </source>
</reference>
<reference key="2">
    <citation type="journal article" date="2004" name="Nucleic Acids Res.">
        <title>Thermoadaptation trait revealed by the genome sequence of thermophilic Geobacillus kaustophilus.</title>
        <authorList>
            <person name="Takami H."/>
            <person name="Takaki Y."/>
            <person name="Chee G.-J."/>
            <person name="Nishi S."/>
            <person name="Shimamura S."/>
            <person name="Suzuki H."/>
            <person name="Matsui S."/>
            <person name="Uchiyama I."/>
        </authorList>
    </citation>
    <scope>NUCLEOTIDE SEQUENCE [LARGE SCALE GENOMIC DNA]</scope>
    <source>
        <strain>HTA426</strain>
    </source>
</reference>
<dbReference type="EC" id="4.3.1.18" evidence="1"/>
<dbReference type="EMBL" id="AB126619">
    <property type="protein sequence ID" value="BAD18349.1"/>
    <property type="molecule type" value="Genomic_DNA"/>
</dbReference>
<dbReference type="EMBL" id="BA000043">
    <property type="protein sequence ID" value="BAD76207.1"/>
    <property type="molecule type" value="Genomic_DNA"/>
</dbReference>
<dbReference type="SMR" id="Q75TC9"/>
<dbReference type="STRING" id="235909.GK1922"/>
<dbReference type="KEGG" id="gka:GK1922"/>
<dbReference type="PATRIC" id="fig|235909.7.peg.2061"/>
<dbReference type="eggNOG" id="COG3048">
    <property type="taxonomic scope" value="Bacteria"/>
</dbReference>
<dbReference type="HOGENOM" id="CLU_035707_0_0_9"/>
<dbReference type="Proteomes" id="UP000001172">
    <property type="component" value="Chromosome"/>
</dbReference>
<dbReference type="GO" id="GO:0008721">
    <property type="term" value="F:D-serine ammonia-lyase activity"/>
    <property type="evidence" value="ECO:0007669"/>
    <property type="project" value="UniProtKB-EC"/>
</dbReference>
<dbReference type="GO" id="GO:0016836">
    <property type="term" value="F:hydro-lyase activity"/>
    <property type="evidence" value="ECO:0007669"/>
    <property type="project" value="UniProtKB-UniRule"/>
</dbReference>
<dbReference type="GO" id="GO:0030170">
    <property type="term" value="F:pyridoxal phosphate binding"/>
    <property type="evidence" value="ECO:0007669"/>
    <property type="project" value="InterPro"/>
</dbReference>
<dbReference type="GO" id="GO:0036088">
    <property type="term" value="P:D-serine catabolic process"/>
    <property type="evidence" value="ECO:0007669"/>
    <property type="project" value="TreeGrafter"/>
</dbReference>
<dbReference type="GO" id="GO:0009097">
    <property type="term" value="P:isoleucine biosynthetic process"/>
    <property type="evidence" value="ECO:0007669"/>
    <property type="project" value="TreeGrafter"/>
</dbReference>
<dbReference type="CDD" id="cd06447">
    <property type="entry name" value="D-Ser-dehyd"/>
    <property type="match status" value="1"/>
</dbReference>
<dbReference type="Gene3D" id="3.40.50.1100">
    <property type="match status" value="2"/>
</dbReference>
<dbReference type="HAMAP" id="MF_01030">
    <property type="entry name" value="D_Ser_dehydrat"/>
    <property type="match status" value="1"/>
</dbReference>
<dbReference type="InterPro" id="IPR011780">
    <property type="entry name" value="D_Ser_am_lyase"/>
</dbReference>
<dbReference type="InterPro" id="IPR050147">
    <property type="entry name" value="Ser/Thr_Dehydratase"/>
</dbReference>
<dbReference type="InterPro" id="IPR000634">
    <property type="entry name" value="Ser/Thr_deHydtase_PyrdxlP-BS"/>
</dbReference>
<dbReference type="InterPro" id="IPR001926">
    <property type="entry name" value="TrpB-like_PALP"/>
</dbReference>
<dbReference type="InterPro" id="IPR036052">
    <property type="entry name" value="TrpB-like_PALP_sf"/>
</dbReference>
<dbReference type="NCBIfam" id="TIGR02035">
    <property type="entry name" value="D_Ser_am_lyase"/>
    <property type="match status" value="1"/>
</dbReference>
<dbReference type="NCBIfam" id="NF002823">
    <property type="entry name" value="PRK02991.1"/>
    <property type="match status" value="1"/>
</dbReference>
<dbReference type="PANTHER" id="PTHR48078:SF9">
    <property type="entry name" value="D-SERINE DEHYDRATASE"/>
    <property type="match status" value="1"/>
</dbReference>
<dbReference type="PANTHER" id="PTHR48078">
    <property type="entry name" value="THREONINE DEHYDRATASE, MITOCHONDRIAL-RELATED"/>
    <property type="match status" value="1"/>
</dbReference>
<dbReference type="Pfam" id="PF00291">
    <property type="entry name" value="PALP"/>
    <property type="match status" value="1"/>
</dbReference>
<dbReference type="SUPFAM" id="SSF53686">
    <property type="entry name" value="Tryptophan synthase beta subunit-like PLP-dependent enzymes"/>
    <property type="match status" value="1"/>
</dbReference>
<dbReference type="PROSITE" id="PS00165">
    <property type="entry name" value="DEHYDRATASE_SER_THR"/>
    <property type="match status" value="1"/>
</dbReference>
<feature type="chain" id="PRO_0000291731" description="Probable D-serine dehydratase">
    <location>
        <begin position="1"/>
        <end position="441"/>
    </location>
</feature>
<feature type="modified residue" description="N6-(pyridoxal phosphate)lysine" evidence="1">
    <location>
        <position position="101"/>
    </location>
</feature>
<gene>
    <name evidence="1" type="primary">dsdA</name>
    <name type="ordered locus">GK1922</name>
    <name type="ORF">GKB09</name>
</gene>